<reference key="1">
    <citation type="journal article" date="2001" name="Cell">
        <title>A diverse family of GPCRs expressed in specific subsets of nociceptive sensory neurons.</title>
        <authorList>
            <person name="Dong X."/>
            <person name="Han S.-K."/>
            <person name="Zylka M.J."/>
            <person name="Simon M.I."/>
            <person name="Anderson D.J."/>
        </authorList>
    </citation>
    <scope>NUCLEOTIDE SEQUENCE [GENOMIC DNA]</scope>
    <source>
        <strain>C57BL/6J</strain>
    </source>
</reference>
<reference key="2">
    <citation type="journal article" date="2004" name="Genome Res.">
        <title>The status, quality, and expansion of the NIH full-length cDNA project: the Mammalian Gene Collection (MGC).</title>
        <authorList>
            <consortium name="The MGC Project Team"/>
        </authorList>
    </citation>
    <scope>NUCLEOTIDE SEQUENCE [LARGE SCALE MRNA] OF 2-312</scope>
</reference>
<comment type="function">
    <text evidence="1">Orphan receptor. Probably involved in the function of nociceptive neurons. May regulate nociceptor function and/or development, including the sensation or modulation of pain (By similarity).</text>
</comment>
<comment type="subcellular location">
    <subcellularLocation>
        <location evidence="4">Membrane</location>
        <topology evidence="4">Multi-pass membrane protein</topology>
    </subcellularLocation>
</comment>
<comment type="similarity">
    <text evidence="3">Belongs to the G-protein coupled receptor 1 family. Mas subfamily.</text>
</comment>
<gene>
    <name type="primary">Mrgprb3</name>
    <name type="synonym">Mrgb3</name>
</gene>
<proteinExistence type="evidence at transcript level"/>
<organism>
    <name type="scientific">Mus musculus</name>
    <name type="common">Mouse</name>
    <dbReference type="NCBI Taxonomy" id="10090"/>
    <lineage>
        <taxon>Eukaryota</taxon>
        <taxon>Metazoa</taxon>
        <taxon>Chordata</taxon>
        <taxon>Craniata</taxon>
        <taxon>Vertebrata</taxon>
        <taxon>Euteleostomi</taxon>
        <taxon>Mammalia</taxon>
        <taxon>Eutheria</taxon>
        <taxon>Euarchontoglires</taxon>
        <taxon>Glires</taxon>
        <taxon>Rodentia</taxon>
        <taxon>Myomorpha</taxon>
        <taxon>Muroidea</taxon>
        <taxon>Muridae</taxon>
        <taxon>Murinae</taxon>
        <taxon>Mus</taxon>
        <taxon>Mus</taxon>
    </lineage>
</organism>
<protein>
    <recommendedName>
        <fullName>Mas-related G-protein coupled receptor member B3</fullName>
    </recommendedName>
</protein>
<sequence length="312" mass="35510">MALRTSLITTTAPDKTSLPISICIIKFQVMNLLSITISPVGMVLNIIVLWFLGFQICRNAFSAYILNLAVADFLFLCSHSIFSFLIVCKLHYFLFYIRQLLDTVTMFAYVFGLSITTIISIECCLSIMWPIWYHCQRPRHTSAVICVLLWALSLLFPALQMEKCSVLFNTFEYSWCGIINIISGAWLVVLFVVLCGFSLILLLRISCGSQQIPVTRLNVTIALRVLLLLIFGIPFGIFWIVDKWNEENFFVRACGFSHHILYVYCINICVNATIYFLVGSIRHGKFQKMTLKLILQRAIQGTPEEEGGERGP</sequence>
<feature type="chain" id="PRO_0000305298" description="Mas-related G-protein coupled receptor member B3">
    <location>
        <begin position="1"/>
        <end position="312"/>
    </location>
</feature>
<feature type="topological domain" description="Extracellular" evidence="2">
    <location>
        <begin position="1"/>
        <end position="31"/>
    </location>
</feature>
<feature type="transmembrane region" description="Helical; Name=1" evidence="2">
    <location>
        <begin position="32"/>
        <end position="52"/>
    </location>
</feature>
<feature type="topological domain" description="Cytoplasmic" evidence="2">
    <location>
        <begin position="53"/>
        <end position="67"/>
    </location>
</feature>
<feature type="transmembrane region" description="Helical; Name=2" evidence="2">
    <location>
        <begin position="68"/>
        <end position="88"/>
    </location>
</feature>
<feature type="topological domain" description="Extracellular" evidence="2">
    <location>
        <begin position="89"/>
        <end position="106"/>
    </location>
</feature>
<feature type="transmembrane region" description="Helical; Name=3" evidence="2">
    <location>
        <begin position="107"/>
        <end position="127"/>
    </location>
</feature>
<feature type="topological domain" description="Cytoplasmic" evidence="2">
    <location>
        <begin position="128"/>
        <end position="140"/>
    </location>
</feature>
<feature type="transmembrane region" description="Helical; Name=4" evidence="2">
    <location>
        <begin position="141"/>
        <end position="161"/>
    </location>
</feature>
<feature type="topological domain" description="Extracellular" evidence="2">
    <location>
        <begin position="162"/>
        <end position="180"/>
    </location>
</feature>
<feature type="transmembrane region" description="Helical; Name=5" evidence="2">
    <location>
        <begin position="181"/>
        <end position="201"/>
    </location>
</feature>
<feature type="topological domain" description="Cytoplasmic" evidence="2">
    <location>
        <begin position="202"/>
        <end position="220"/>
    </location>
</feature>
<feature type="transmembrane region" description="Helical; Name=6" evidence="2">
    <location>
        <begin position="221"/>
        <end position="241"/>
    </location>
</feature>
<feature type="topological domain" description="Extracellular" evidence="2">
    <location>
        <begin position="242"/>
        <end position="259"/>
    </location>
</feature>
<feature type="transmembrane region" description="Helical; Name=7" evidence="2">
    <location>
        <begin position="260"/>
        <end position="280"/>
    </location>
</feature>
<feature type="topological domain" description="Cytoplasmic" evidence="2">
    <location>
        <begin position="281"/>
        <end position="312"/>
    </location>
</feature>
<feature type="sequence conflict" description="In Ref. 2; AAI07193." evidence="4" ref="2">
    <original>G</original>
    <variation>D</variation>
    <location>
        <position position="301"/>
    </location>
</feature>
<dbReference type="EMBL" id="AY042201">
    <property type="protein sequence ID" value="AAK91797.1"/>
    <property type="molecule type" value="Genomic_DNA"/>
</dbReference>
<dbReference type="EMBL" id="BC107192">
    <property type="protein sequence ID" value="AAI07193.1"/>
    <property type="molecule type" value="mRNA"/>
</dbReference>
<dbReference type="EMBL" id="BC107193">
    <property type="protein sequence ID" value="AAI07194.1"/>
    <property type="molecule type" value="mRNA"/>
</dbReference>
<dbReference type="EMBL" id="BC114400">
    <property type="protein sequence ID" value="AAI14401.1"/>
    <property type="molecule type" value="mRNA"/>
</dbReference>
<dbReference type="EMBL" id="BC114428">
    <property type="protein sequence ID" value="AAI14429.1"/>
    <property type="molecule type" value="mRNA"/>
</dbReference>
<dbReference type="CCDS" id="CCDS21304.1"/>
<dbReference type="RefSeq" id="NP_997420.1">
    <property type="nucleotide sequence ID" value="NM_207537.1"/>
</dbReference>
<dbReference type="SMR" id="Q91ZC1"/>
<dbReference type="STRING" id="10090.ENSMUSP00000091945"/>
<dbReference type="iPTMnet" id="Q91ZC1"/>
<dbReference type="PhosphoSitePlus" id="Q91ZC1"/>
<dbReference type="PaxDb" id="10090-ENSMUSP00000091945"/>
<dbReference type="Pumba" id="Q91ZC1"/>
<dbReference type="DNASU" id="404238"/>
<dbReference type="Ensembl" id="ENSMUST00000094383.3">
    <property type="protein sequence ID" value="ENSMUSP00000091945.2"/>
    <property type="gene ID" value="ENSMUSG00000070546.3"/>
</dbReference>
<dbReference type="GeneID" id="404238"/>
<dbReference type="KEGG" id="mmu:404238"/>
<dbReference type="UCSC" id="uc009hau.1">
    <property type="organism name" value="mouse"/>
</dbReference>
<dbReference type="AGR" id="MGI:3033117"/>
<dbReference type="CTD" id="404238"/>
<dbReference type="MGI" id="MGI:3033117">
    <property type="gene designation" value="Mrgprb3"/>
</dbReference>
<dbReference type="VEuPathDB" id="HostDB:ENSMUSG00000070546"/>
<dbReference type="eggNOG" id="ENOG502RTWA">
    <property type="taxonomic scope" value="Eukaryota"/>
</dbReference>
<dbReference type="GeneTree" id="ENSGT01030000234639"/>
<dbReference type="HOGENOM" id="CLU_009579_4_1_1"/>
<dbReference type="InParanoid" id="Q91ZC1"/>
<dbReference type="OMA" id="SIRHGKF"/>
<dbReference type="OrthoDB" id="9631784at2759"/>
<dbReference type="PhylomeDB" id="Q91ZC1"/>
<dbReference type="TreeFam" id="TF336336"/>
<dbReference type="BioGRID-ORCS" id="404238">
    <property type="hits" value="2 hits in 77 CRISPR screens"/>
</dbReference>
<dbReference type="PRO" id="PR:Q91ZC1"/>
<dbReference type="Proteomes" id="UP000000589">
    <property type="component" value="Chromosome 7"/>
</dbReference>
<dbReference type="RNAct" id="Q91ZC1">
    <property type="molecule type" value="protein"/>
</dbReference>
<dbReference type="Bgee" id="ENSMUSG00000070546">
    <property type="expression patterns" value="Expressed in zone of skin and 1 other cell type or tissue"/>
</dbReference>
<dbReference type="GO" id="GO:0016020">
    <property type="term" value="C:membrane"/>
    <property type="evidence" value="ECO:0007669"/>
    <property type="project" value="UniProtKB-SubCell"/>
</dbReference>
<dbReference type="GO" id="GO:0004930">
    <property type="term" value="F:G protein-coupled receptor activity"/>
    <property type="evidence" value="ECO:0007669"/>
    <property type="project" value="UniProtKB-KW"/>
</dbReference>
<dbReference type="CDD" id="cd15107">
    <property type="entry name" value="7tmA_MrgprB"/>
    <property type="match status" value="1"/>
</dbReference>
<dbReference type="FunFam" id="1.20.1070.10:FF:000140">
    <property type="entry name" value="Mas-related G-protein coupled receptor member X2"/>
    <property type="match status" value="1"/>
</dbReference>
<dbReference type="Gene3D" id="1.20.1070.10">
    <property type="entry name" value="Rhodopsin 7-helix transmembrane proteins"/>
    <property type="match status" value="1"/>
</dbReference>
<dbReference type="InterPro" id="IPR017452">
    <property type="entry name" value="GPCR_Rhodpsn_7TM"/>
</dbReference>
<dbReference type="InterPro" id="IPR026234">
    <property type="entry name" value="MRGPCRFAMILY"/>
</dbReference>
<dbReference type="PANTHER" id="PTHR11334">
    <property type="entry name" value="MAS-RELATED G-PROTEIN COUPLED RECEPTOR"/>
    <property type="match status" value="1"/>
</dbReference>
<dbReference type="PANTHER" id="PTHR11334:SF31">
    <property type="entry name" value="MAS-RELATED G-PROTEIN COUPLED RECEPTOR MEMBER B3"/>
    <property type="match status" value="1"/>
</dbReference>
<dbReference type="PRINTS" id="PR02108">
    <property type="entry name" value="MRGPCRFAMILY"/>
</dbReference>
<dbReference type="SUPFAM" id="SSF81321">
    <property type="entry name" value="Family A G protein-coupled receptor-like"/>
    <property type="match status" value="1"/>
</dbReference>
<dbReference type="PROSITE" id="PS50262">
    <property type="entry name" value="G_PROTEIN_RECEP_F1_2"/>
    <property type="match status" value="1"/>
</dbReference>
<keyword id="KW-0297">G-protein coupled receptor</keyword>
<keyword id="KW-0472">Membrane</keyword>
<keyword id="KW-0675">Receptor</keyword>
<keyword id="KW-1185">Reference proteome</keyword>
<keyword id="KW-0807">Transducer</keyword>
<keyword id="KW-0812">Transmembrane</keyword>
<keyword id="KW-1133">Transmembrane helix</keyword>
<name>MRGB3_MOUSE</name>
<evidence type="ECO:0000250" key="1"/>
<evidence type="ECO:0000255" key="2"/>
<evidence type="ECO:0000255" key="3">
    <source>
        <dbReference type="PROSITE-ProRule" id="PRU00521"/>
    </source>
</evidence>
<evidence type="ECO:0000305" key="4"/>
<accession>Q91ZC1</accession>
<accession>Q3B813</accession>
<accession>Q3B814</accession>